<reference key="1">
    <citation type="journal article" date="2009" name="PLoS Genet.">
        <title>Organised genome dynamics in the Escherichia coli species results in highly diverse adaptive paths.</title>
        <authorList>
            <person name="Touchon M."/>
            <person name="Hoede C."/>
            <person name="Tenaillon O."/>
            <person name="Barbe V."/>
            <person name="Baeriswyl S."/>
            <person name="Bidet P."/>
            <person name="Bingen E."/>
            <person name="Bonacorsi S."/>
            <person name="Bouchier C."/>
            <person name="Bouvet O."/>
            <person name="Calteau A."/>
            <person name="Chiapello H."/>
            <person name="Clermont O."/>
            <person name="Cruveiller S."/>
            <person name="Danchin A."/>
            <person name="Diard M."/>
            <person name="Dossat C."/>
            <person name="Karoui M.E."/>
            <person name="Frapy E."/>
            <person name="Garry L."/>
            <person name="Ghigo J.M."/>
            <person name="Gilles A.M."/>
            <person name="Johnson J."/>
            <person name="Le Bouguenec C."/>
            <person name="Lescat M."/>
            <person name="Mangenot S."/>
            <person name="Martinez-Jehanne V."/>
            <person name="Matic I."/>
            <person name="Nassif X."/>
            <person name="Oztas S."/>
            <person name="Petit M.A."/>
            <person name="Pichon C."/>
            <person name="Rouy Z."/>
            <person name="Ruf C.S."/>
            <person name="Schneider D."/>
            <person name="Tourret J."/>
            <person name="Vacherie B."/>
            <person name="Vallenet D."/>
            <person name="Medigue C."/>
            <person name="Rocha E.P.C."/>
            <person name="Denamur E."/>
        </authorList>
    </citation>
    <scope>NUCLEOTIDE SEQUENCE [LARGE SCALE GENOMIC DNA]</scope>
    <source>
        <strain>UMN026 / ExPEC</strain>
    </source>
</reference>
<comment type="function">
    <text evidence="1">Catalyzes the transfer of a phosphate group to glutamate to form L-glutamate 5-phosphate.</text>
</comment>
<comment type="catalytic activity">
    <reaction evidence="1">
        <text>L-glutamate + ATP = L-glutamyl 5-phosphate + ADP</text>
        <dbReference type="Rhea" id="RHEA:14877"/>
        <dbReference type="ChEBI" id="CHEBI:29985"/>
        <dbReference type="ChEBI" id="CHEBI:30616"/>
        <dbReference type="ChEBI" id="CHEBI:58274"/>
        <dbReference type="ChEBI" id="CHEBI:456216"/>
        <dbReference type="EC" id="2.7.2.11"/>
    </reaction>
</comment>
<comment type="pathway">
    <text evidence="1">Amino-acid biosynthesis; L-proline biosynthesis; L-glutamate 5-semialdehyde from L-glutamate: step 1/2.</text>
</comment>
<comment type="subcellular location">
    <subcellularLocation>
        <location evidence="1">Cytoplasm</location>
    </subcellularLocation>
</comment>
<comment type="similarity">
    <text evidence="1">Belongs to the glutamate 5-kinase family.</text>
</comment>
<evidence type="ECO:0000255" key="1">
    <source>
        <dbReference type="HAMAP-Rule" id="MF_00456"/>
    </source>
</evidence>
<gene>
    <name evidence="1" type="primary">proB</name>
    <name type="ordered locus">ECUMN_0308</name>
</gene>
<organism>
    <name type="scientific">Escherichia coli O17:K52:H18 (strain UMN026 / ExPEC)</name>
    <dbReference type="NCBI Taxonomy" id="585056"/>
    <lineage>
        <taxon>Bacteria</taxon>
        <taxon>Pseudomonadati</taxon>
        <taxon>Pseudomonadota</taxon>
        <taxon>Gammaproteobacteria</taxon>
        <taxon>Enterobacterales</taxon>
        <taxon>Enterobacteriaceae</taxon>
        <taxon>Escherichia</taxon>
    </lineage>
</organism>
<sequence>MSDSQTLVVKLGTSVLTGGSRRLNRAHIVELVRQCAQLHAAGHRIVIVTSGAIAAGREHLGYPELPATIASKQLLAAVGQSRLIQLWEQLFSIYGIHVGQMLLTRADMEDRERFLNARDTLRALLDNNIVPVINENDAVATAEIKVGDNDNLSALAAILAGADKLLLLTDQKGLYTADPRSNPQAELIKDVYGIDDALRAIAGDSVSGLGTGGMSTKLQAADVACRAGIDTIIAAGSKPGVIGDVMEGISVGTLFHAQATPLENRKRWIFGAPPAGEITVDEGATAAILERGSSLLPKGIKSVTGNFSRGEVIRICNLEGRDIAHGVSRYNSDALRRIAGHHSQEIDAILGYEYGPVAVHRDDMITR</sequence>
<feature type="chain" id="PRO_1000125233" description="Glutamate 5-kinase">
    <location>
        <begin position="1"/>
        <end position="367"/>
    </location>
</feature>
<feature type="domain" description="PUA" evidence="1">
    <location>
        <begin position="275"/>
        <end position="353"/>
    </location>
</feature>
<feature type="binding site" evidence="1">
    <location>
        <position position="10"/>
    </location>
    <ligand>
        <name>ATP</name>
        <dbReference type="ChEBI" id="CHEBI:30616"/>
    </ligand>
</feature>
<feature type="binding site" evidence="1">
    <location>
        <position position="50"/>
    </location>
    <ligand>
        <name>substrate</name>
    </ligand>
</feature>
<feature type="binding site" evidence="1">
    <location>
        <position position="137"/>
    </location>
    <ligand>
        <name>substrate</name>
    </ligand>
</feature>
<feature type="binding site" evidence="1">
    <location>
        <position position="149"/>
    </location>
    <ligand>
        <name>substrate</name>
    </ligand>
</feature>
<feature type="binding site" evidence="1">
    <location>
        <begin position="169"/>
        <end position="170"/>
    </location>
    <ligand>
        <name>ATP</name>
        <dbReference type="ChEBI" id="CHEBI:30616"/>
    </ligand>
</feature>
<feature type="binding site" evidence="1">
    <location>
        <begin position="211"/>
        <end position="217"/>
    </location>
    <ligand>
        <name>ATP</name>
        <dbReference type="ChEBI" id="CHEBI:30616"/>
    </ligand>
</feature>
<protein>
    <recommendedName>
        <fullName evidence="1">Glutamate 5-kinase</fullName>
        <ecNumber evidence="1">2.7.2.11</ecNumber>
    </recommendedName>
    <alternativeName>
        <fullName evidence="1">Gamma-glutamyl kinase</fullName>
        <shortName evidence="1">GK</shortName>
    </alternativeName>
</protein>
<dbReference type="EC" id="2.7.2.11" evidence="1"/>
<dbReference type="EMBL" id="CU928163">
    <property type="protein sequence ID" value="CAR11523.1"/>
    <property type="molecule type" value="Genomic_DNA"/>
</dbReference>
<dbReference type="RefSeq" id="WP_001285288.1">
    <property type="nucleotide sequence ID" value="NC_011751.1"/>
</dbReference>
<dbReference type="RefSeq" id="YP_002411077.1">
    <property type="nucleotide sequence ID" value="NC_011751.1"/>
</dbReference>
<dbReference type="SMR" id="B7N8H3"/>
<dbReference type="STRING" id="585056.ECUMN_0308"/>
<dbReference type="GeneID" id="93777151"/>
<dbReference type="KEGG" id="eum:ECUMN_0308"/>
<dbReference type="PATRIC" id="fig|585056.7.peg.503"/>
<dbReference type="HOGENOM" id="CLU_025400_2_0_6"/>
<dbReference type="UniPathway" id="UPA00098">
    <property type="reaction ID" value="UER00359"/>
</dbReference>
<dbReference type="Proteomes" id="UP000007097">
    <property type="component" value="Chromosome"/>
</dbReference>
<dbReference type="GO" id="GO:0005829">
    <property type="term" value="C:cytosol"/>
    <property type="evidence" value="ECO:0007669"/>
    <property type="project" value="TreeGrafter"/>
</dbReference>
<dbReference type="GO" id="GO:0005524">
    <property type="term" value="F:ATP binding"/>
    <property type="evidence" value="ECO:0007669"/>
    <property type="project" value="UniProtKB-KW"/>
</dbReference>
<dbReference type="GO" id="GO:0004349">
    <property type="term" value="F:glutamate 5-kinase activity"/>
    <property type="evidence" value="ECO:0007669"/>
    <property type="project" value="UniProtKB-UniRule"/>
</dbReference>
<dbReference type="GO" id="GO:0003723">
    <property type="term" value="F:RNA binding"/>
    <property type="evidence" value="ECO:0007669"/>
    <property type="project" value="InterPro"/>
</dbReference>
<dbReference type="GO" id="GO:0055129">
    <property type="term" value="P:L-proline biosynthetic process"/>
    <property type="evidence" value="ECO:0007669"/>
    <property type="project" value="UniProtKB-UniRule"/>
</dbReference>
<dbReference type="CDD" id="cd04242">
    <property type="entry name" value="AAK_G5K_ProB"/>
    <property type="match status" value="1"/>
</dbReference>
<dbReference type="CDD" id="cd21157">
    <property type="entry name" value="PUA_G5K"/>
    <property type="match status" value="1"/>
</dbReference>
<dbReference type="FunFam" id="2.30.130.10:FF:000003">
    <property type="entry name" value="Glutamate 5-kinase"/>
    <property type="match status" value="1"/>
</dbReference>
<dbReference type="FunFam" id="3.40.1160.10:FF:000006">
    <property type="entry name" value="Glutamate 5-kinase"/>
    <property type="match status" value="1"/>
</dbReference>
<dbReference type="Gene3D" id="3.40.1160.10">
    <property type="entry name" value="Acetylglutamate kinase-like"/>
    <property type="match status" value="2"/>
</dbReference>
<dbReference type="Gene3D" id="2.30.130.10">
    <property type="entry name" value="PUA domain"/>
    <property type="match status" value="1"/>
</dbReference>
<dbReference type="HAMAP" id="MF_00456">
    <property type="entry name" value="ProB"/>
    <property type="match status" value="1"/>
</dbReference>
<dbReference type="InterPro" id="IPR036393">
    <property type="entry name" value="AceGlu_kinase-like_sf"/>
</dbReference>
<dbReference type="InterPro" id="IPR001048">
    <property type="entry name" value="Asp/Glu/Uridylate_kinase"/>
</dbReference>
<dbReference type="InterPro" id="IPR041739">
    <property type="entry name" value="G5K_ProB"/>
</dbReference>
<dbReference type="InterPro" id="IPR001057">
    <property type="entry name" value="Glu/AcGlu_kinase"/>
</dbReference>
<dbReference type="InterPro" id="IPR011529">
    <property type="entry name" value="Glu_5kinase"/>
</dbReference>
<dbReference type="InterPro" id="IPR005715">
    <property type="entry name" value="Glu_5kinase/COase_Synthase"/>
</dbReference>
<dbReference type="InterPro" id="IPR019797">
    <property type="entry name" value="Glutamate_5-kinase_CS"/>
</dbReference>
<dbReference type="InterPro" id="IPR002478">
    <property type="entry name" value="PUA"/>
</dbReference>
<dbReference type="InterPro" id="IPR015947">
    <property type="entry name" value="PUA-like_sf"/>
</dbReference>
<dbReference type="InterPro" id="IPR036974">
    <property type="entry name" value="PUA_sf"/>
</dbReference>
<dbReference type="NCBIfam" id="TIGR01027">
    <property type="entry name" value="proB"/>
    <property type="match status" value="1"/>
</dbReference>
<dbReference type="PANTHER" id="PTHR43654">
    <property type="entry name" value="GLUTAMATE 5-KINASE"/>
    <property type="match status" value="1"/>
</dbReference>
<dbReference type="PANTHER" id="PTHR43654:SF1">
    <property type="entry name" value="ISOPENTENYL PHOSPHATE KINASE"/>
    <property type="match status" value="1"/>
</dbReference>
<dbReference type="Pfam" id="PF00696">
    <property type="entry name" value="AA_kinase"/>
    <property type="match status" value="1"/>
</dbReference>
<dbReference type="Pfam" id="PF01472">
    <property type="entry name" value="PUA"/>
    <property type="match status" value="1"/>
</dbReference>
<dbReference type="PIRSF" id="PIRSF000729">
    <property type="entry name" value="GK"/>
    <property type="match status" value="1"/>
</dbReference>
<dbReference type="PRINTS" id="PR00474">
    <property type="entry name" value="GLU5KINASE"/>
</dbReference>
<dbReference type="SMART" id="SM00359">
    <property type="entry name" value="PUA"/>
    <property type="match status" value="1"/>
</dbReference>
<dbReference type="SUPFAM" id="SSF53633">
    <property type="entry name" value="Carbamate kinase-like"/>
    <property type="match status" value="1"/>
</dbReference>
<dbReference type="SUPFAM" id="SSF88697">
    <property type="entry name" value="PUA domain-like"/>
    <property type="match status" value="1"/>
</dbReference>
<dbReference type="PROSITE" id="PS00902">
    <property type="entry name" value="GLUTAMATE_5_KINASE"/>
    <property type="match status" value="1"/>
</dbReference>
<dbReference type="PROSITE" id="PS50890">
    <property type="entry name" value="PUA"/>
    <property type="match status" value="1"/>
</dbReference>
<name>PROB_ECOLU</name>
<keyword id="KW-0028">Amino-acid biosynthesis</keyword>
<keyword id="KW-0067">ATP-binding</keyword>
<keyword id="KW-0963">Cytoplasm</keyword>
<keyword id="KW-0418">Kinase</keyword>
<keyword id="KW-0547">Nucleotide-binding</keyword>
<keyword id="KW-0641">Proline biosynthesis</keyword>
<keyword id="KW-0808">Transferase</keyword>
<accession>B7N8H3</accession>
<proteinExistence type="inferred from homology"/>